<gene>
    <name evidence="1" type="primary">leuD</name>
    <name type="ordered locus">Sbal_0389</name>
</gene>
<evidence type="ECO:0000255" key="1">
    <source>
        <dbReference type="HAMAP-Rule" id="MF_01031"/>
    </source>
</evidence>
<organism>
    <name type="scientific">Shewanella baltica (strain OS155 / ATCC BAA-1091)</name>
    <dbReference type="NCBI Taxonomy" id="325240"/>
    <lineage>
        <taxon>Bacteria</taxon>
        <taxon>Pseudomonadati</taxon>
        <taxon>Pseudomonadota</taxon>
        <taxon>Gammaproteobacteria</taxon>
        <taxon>Alteromonadales</taxon>
        <taxon>Shewanellaceae</taxon>
        <taxon>Shewanella</taxon>
    </lineage>
</organism>
<keyword id="KW-0028">Amino-acid biosynthesis</keyword>
<keyword id="KW-0100">Branched-chain amino acid biosynthesis</keyword>
<keyword id="KW-0432">Leucine biosynthesis</keyword>
<keyword id="KW-0456">Lyase</keyword>
<keyword id="KW-1185">Reference proteome</keyword>
<name>LEUD_SHEB5</name>
<feature type="chain" id="PRO_1000063831" description="3-isopropylmalate dehydratase small subunit">
    <location>
        <begin position="1"/>
        <end position="201"/>
    </location>
</feature>
<comment type="function">
    <text evidence="1">Catalyzes the isomerization between 2-isopropylmalate and 3-isopropylmalate, via the formation of 2-isopropylmaleate.</text>
</comment>
<comment type="catalytic activity">
    <reaction evidence="1">
        <text>(2R,3S)-3-isopropylmalate = (2S)-2-isopropylmalate</text>
        <dbReference type="Rhea" id="RHEA:32287"/>
        <dbReference type="ChEBI" id="CHEBI:1178"/>
        <dbReference type="ChEBI" id="CHEBI:35121"/>
        <dbReference type="EC" id="4.2.1.33"/>
    </reaction>
</comment>
<comment type="pathway">
    <text evidence="1">Amino-acid biosynthesis; L-leucine biosynthesis; L-leucine from 3-methyl-2-oxobutanoate: step 2/4.</text>
</comment>
<comment type="subunit">
    <text evidence="1">Heterodimer of LeuC and LeuD.</text>
</comment>
<comment type="similarity">
    <text evidence="1">Belongs to the LeuD family. LeuD type 1 subfamily.</text>
</comment>
<sequence>MQPFTTHTGLAVMIDSTNIDTDQIIPKQFLSKVTRDGFGVHLFHDWRYLDDAGDQPNPEFSLNQSRYRGASILLAQENFGCGSSREHAPWALADFGLRAIIAQSFADIFYGNSINNGLLPVALTHAQVRQLMDEVAAEAGAQITVDLTSCKVVSPSGAEFSFTLAESARHKLLNGLDAIGLTLSHAAQIGQYETQIQGWRR</sequence>
<dbReference type="EC" id="4.2.1.33" evidence="1"/>
<dbReference type="EMBL" id="CP000563">
    <property type="protein sequence ID" value="ABN59921.1"/>
    <property type="molecule type" value="Genomic_DNA"/>
</dbReference>
<dbReference type="RefSeq" id="WP_011845610.1">
    <property type="nucleotide sequence ID" value="NC_009052.1"/>
</dbReference>
<dbReference type="SMR" id="A3CZK8"/>
<dbReference type="STRING" id="325240.Sbal_0389"/>
<dbReference type="KEGG" id="sbl:Sbal_0389"/>
<dbReference type="HOGENOM" id="CLU_081378_0_3_6"/>
<dbReference type="OrthoDB" id="9777465at2"/>
<dbReference type="UniPathway" id="UPA00048">
    <property type="reaction ID" value="UER00071"/>
</dbReference>
<dbReference type="Proteomes" id="UP000001557">
    <property type="component" value="Chromosome"/>
</dbReference>
<dbReference type="GO" id="GO:0009316">
    <property type="term" value="C:3-isopropylmalate dehydratase complex"/>
    <property type="evidence" value="ECO:0007669"/>
    <property type="project" value="InterPro"/>
</dbReference>
<dbReference type="GO" id="GO:0003861">
    <property type="term" value="F:3-isopropylmalate dehydratase activity"/>
    <property type="evidence" value="ECO:0007669"/>
    <property type="project" value="UniProtKB-UniRule"/>
</dbReference>
<dbReference type="GO" id="GO:0009098">
    <property type="term" value="P:L-leucine biosynthetic process"/>
    <property type="evidence" value="ECO:0007669"/>
    <property type="project" value="UniProtKB-UniRule"/>
</dbReference>
<dbReference type="CDD" id="cd01577">
    <property type="entry name" value="IPMI_Swivel"/>
    <property type="match status" value="1"/>
</dbReference>
<dbReference type="FunFam" id="3.20.19.10:FF:000003">
    <property type="entry name" value="3-isopropylmalate dehydratase small subunit"/>
    <property type="match status" value="1"/>
</dbReference>
<dbReference type="Gene3D" id="3.20.19.10">
    <property type="entry name" value="Aconitase, domain 4"/>
    <property type="match status" value="1"/>
</dbReference>
<dbReference type="HAMAP" id="MF_01031">
    <property type="entry name" value="LeuD_type1"/>
    <property type="match status" value="1"/>
</dbReference>
<dbReference type="InterPro" id="IPR004431">
    <property type="entry name" value="3-IsopropMal_deHydase_ssu"/>
</dbReference>
<dbReference type="InterPro" id="IPR015928">
    <property type="entry name" value="Aconitase/3IPM_dehydase_swvl"/>
</dbReference>
<dbReference type="InterPro" id="IPR000573">
    <property type="entry name" value="AconitaseA/IPMdHydase_ssu_swvl"/>
</dbReference>
<dbReference type="InterPro" id="IPR033940">
    <property type="entry name" value="IPMI_Swivel"/>
</dbReference>
<dbReference type="InterPro" id="IPR050075">
    <property type="entry name" value="LeuD"/>
</dbReference>
<dbReference type="NCBIfam" id="TIGR00171">
    <property type="entry name" value="leuD"/>
    <property type="match status" value="1"/>
</dbReference>
<dbReference type="NCBIfam" id="NF002458">
    <property type="entry name" value="PRK01641.1"/>
    <property type="match status" value="1"/>
</dbReference>
<dbReference type="PANTHER" id="PTHR43345:SF5">
    <property type="entry name" value="3-ISOPROPYLMALATE DEHYDRATASE SMALL SUBUNIT"/>
    <property type="match status" value="1"/>
</dbReference>
<dbReference type="PANTHER" id="PTHR43345">
    <property type="entry name" value="3-ISOPROPYLMALATE DEHYDRATASE SMALL SUBUNIT 2-RELATED-RELATED"/>
    <property type="match status" value="1"/>
</dbReference>
<dbReference type="Pfam" id="PF00694">
    <property type="entry name" value="Aconitase_C"/>
    <property type="match status" value="1"/>
</dbReference>
<dbReference type="SUPFAM" id="SSF52016">
    <property type="entry name" value="LeuD/IlvD-like"/>
    <property type="match status" value="1"/>
</dbReference>
<proteinExistence type="inferred from homology"/>
<reference key="1">
    <citation type="submission" date="2007-02" db="EMBL/GenBank/DDBJ databases">
        <title>Complete sequence of chromosome of Shewanella baltica OS155.</title>
        <authorList>
            <consortium name="US DOE Joint Genome Institute"/>
            <person name="Copeland A."/>
            <person name="Lucas S."/>
            <person name="Lapidus A."/>
            <person name="Barry K."/>
            <person name="Detter J.C."/>
            <person name="Glavina del Rio T."/>
            <person name="Hammon N."/>
            <person name="Israni S."/>
            <person name="Dalin E."/>
            <person name="Tice H."/>
            <person name="Pitluck S."/>
            <person name="Sims D.R."/>
            <person name="Brettin T."/>
            <person name="Bruce D."/>
            <person name="Han C."/>
            <person name="Tapia R."/>
            <person name="Brainard J."/>
            <person name="Schmutz J."/>
            <person name="Larimer F."/>
            <person name="Land M."/>
            <person name="Hauser L."/>
            <person name="Kyrpides N."/>
            <person name="Mikhailova N."/>
            <person name="Brettar I."/>
            <person name="Klappenbach J."/>
            <person name="Konstantinidis K."/>
            <person name="Rodrigues J."/>
            <person name="Tiedje J."/>
            <person name="Richardson P."/>
        </authorList>
    </citation>
    <scope>NUCLEOTIDE SEQUENCE [LARGE SCALE GENOMIC DNA]</scope>
    <source>
        <strain>OS155 / ATCC BAA-1091</strain>
    </source>
</reference>
<accession>A3CZK8</accession>
<protein>
    <recommendedName>
        <fullName evidence="1">3-isopropylmalate dehydratase small subunit</fullName>
        <ecNumber evidence="1">4.2.1.33</ecNumber>
    </recommendedName>
    <alternativeName>
        <fullName evidence="1">Alpha-IPM isomerase</fullName>
        <shortName evidence="1">IPMI</shortName>
    </alternativeName>
    <alternativeName>
        <fullName evidence="1">Isopropylmalate isomerase</fullName>
    </alternativeName>
</protein>